<name>RL9_STRPJ</name>
<reference key="1">
    <citation type="journal article" date="2009" name="J. Bacteriol.">
        <title>Role of conjugative elements in the evolution of the multidrug-resistant pandemic clone Streptococcus pneumoniae Spain23F ST81.</title>
        <authorList>
            <person name="Croucher N.J."/>
            <person name="Walker D."/>
            <person name="Romero P."/>
            <person name="Lennard N."/>
            <person name="Paterson G.K."/>
            <person name="Bason N.C."/>
            <person name="Mitchell A.M."/>
            <person name="Quail M.A."/>
            <person name="Andrew P.W."/>
            <person name="Parkhill J."/>
            <person name="Bentley S.D."/>
            <person name="Mitchell T.J."/>
        </authorList>
    </citation>
    <scope>NUCLEOTIDE SEQUENCE [LARGE SCALE GENOMIC DNA]</scope>
    <source>
        <strain>ATCC 700669 / Spain 23F-1</strain>
    </source>
</reference>
<gene>
    <name evidence="1" type="primary">rplI</name>
    <name type="ordered locus">SPN23F22370</name>
</gene>
<dbReference type="EMBL" id="FM211187">
    <property type="protein sequence ID" value="CAR69966.1"/>
    <property type="molecule type" value="Genomic_DNA"/>
</dbReference>
<dbReference type="RefSeq" id="WP_000864220.1">
    <property type="nucleotide sequence ID" value="NC_011900.1"/>
</dbReference>
<dbReference type="SMR" id="B8ZQ95"/>
<dbReference type="GeneID" id="45652575"/>
<dbReference type="KEGG" id="sne:SPN23F22370"/>
<dbReference type="HOGENOM" id="CLU_078938_3_2_9"/>
<dbReference type="GO" id="GO:1990904">
    <property type="term" value="C:ribonucleoprotein complex"/>
    <property type="evidence" value="ECO:0007669"/>
    <property type="project" value="UniProtKB-KW"/>
</dbReference>
<dbReference type="GO" id="GO:0005840">
    <property type="term" value="C:ribosome"/>
    <property type="evidence" value="ECO:0007669"/>
    <property type="project" value="UniProtKB-KW"/>
</dbReference>
<dbReference type="GO" id="GO:0019843">
    <property type="term" value="F:rRNA binding"/>
    <property type="evidence" value="ECO:0007669"/>
    <property type="project" value="UniProtKB-UniRule"/>
</dbReference>
<dbReference type="GO" id="GO:0003735">
    <property type="term" value="F:structural constituent of ribosome"/>
    <property type="evidence" value="ECO:0007669"/>
    <property type="project" value="InterPro"/>
</dbReference>
<dbReference type="GO" id="GO:0006412">
    <property type="term" value="P:translation"/>
    <property type="evidence" value="ECO:0007669"/>
    <property type="project" value="UniProtKB-UniRule"/>
</dbReference>
<dbReference type="FunFam" id="3.10.430.100:FF:000009">
    <property type="entry name" value="50S ribosomal protein L9"/>
    <property type="match status" value="1"/>
</dbReference>
<dbReference type="FunFam" id="3.40.5.10:FF:000002">
    <property type="entry name" value="50S ribosomal protein L9"/>
    <property type="match status" value="1"/>
</dbReference>
<dbReference type="Gene3D" id="3.10.430.100">
    <property type="entry name" value="Ribosomal protein L9, C-terminal domain"/>
    <property type="match status" value="1"/>
</dbReference>
<dbReference type="Gene3D" id="3.40.5.10">
    <property type="entry name" value="Ribosomal protein L9, N-terminal domain"/>
    <property type="match status" value="1"/>
</dbReference>
<dbReference type="HAMAP" id="MF_00503">
    <property type="entry name" value="Ribosomal_bL9"/>
    <property type="match status" value="1"/>
</dbReference>
<dbReference type="InterPro" id="IPR000244">
    <property type="entry name" value="Ribosomal_bL9"/>
</dbReference>
<dbReference type="InterPro" id="IPR009027">
    <property type="entry name" value="Ribosomal_bL9/RNase_H1_N"/>
</dbReference>
<dbReference type="InterPro" id="IPR020594">
    <property type="entry name" value="Ribosomal_bL9_bac/chp"/>
</dbReference>
<dbReference type="InterPro" id="IPR020069">
    <property type="entry name" value="Ribosomal_bL9_C"/>
</dbReference>
<dbReference type="InterPro" id="IPR036791">
    <property type="entry name" value="Ribosomal_bL9_C_sf"/>
</dbReference>
<dbReference type="InterPro" id="IPR020070">
    <property type="entry name" value="Ribosomal_bL9_N"/>
</dbReference>
<dbReference type="InterPro" id="IPR036935">
    <property type="entry name" value="Ribosomal_bL9_N_sf"/>
</dbReference>
<dbReference type="NCBIfam" id="TIGR00158">
    <property type="entry name" value="L9"/>
    <property type="match status" value="1"/>
</dbReference>
<dbReference type="PANTHER" id="PTHR21368">
    <property type="entry name" value="50S RIBOSOMAL PROTEIN L9"/>
    <property type="match status" value="1"/>
</dbReference>
<dbReference type="Pfam" id="PF03948">
    <property type="entry name" value="Ribosomal_L9_C"/>
    <property type="match status" value="1"/>
</dbReference>
<dbReference type="Pfam" id="PF01281">
    <property type="entry name" value="Ribosomal_L9_N"/>
    <property type="match status" value="1"/>
</dbReference>
<dbReference type="SUPFAM" id="SSF55658">
    <property type="entry name" value="L9 N-domain-like"/>
    <property type="match status" value="1"/>
</dbReference>
<dbReference type="SUPFAM" id="SSF55653">
    <property type="entry name" value="Ribosomal protein L9 C-domain"/>
    <property type="match status" value="1"/>
</dbReference>
<dbReference type="PROSITE" id="PS00651">
    <property type="entry name" value="RIBOSOMAL_L9"/>
    <property type="match status" value="1"/>
</dbReference>
<protein>
    <recommendedName>
        <fullName evidence="1">Large ribosomal subunit protein bL9</fullName>
    </recommendedName>
    <alternativeName>
        <fullName evidence="2">50S ribosomal protein L9</fullName>
    </alternativeName>
</protein>
<organism>
    <name type="scientific">Streptococcus pneumoniae (strain ATCC 700669 / Spain 23F-1)</name>
    <dbReference type="NCBI Taxonomy" id="561276"/>
    <lineage>
        <taxon>Bacteria</taxon>
        <taxon>Bacillati</taxon>
        <taxon>Bacillota</taxon>
        <taxon>Bacilli</taxon>
        <taxon>Lactobacillales</taxon>
        <taxon>Streptococcaceae</taxon>
        <taxon>Streptococcus</taxon>
    </lineage>
</organism>
<sequence length="150" mass="16523">MKVIFLADVKGKGKKGEIKEVPTGYAQNFLIKKNLAKEATAQAVGELRGKQKSEEKAHAEMIAEGKAIKAQLEAEETVVEFVEKVGPDGRTFGSITNKKIAEELQKQFGIKIDKRHIQVQAPIRAVGLIDVPVKIYQDITSVINLRVKEG</sequence>
<comment type="function">
    <text evidence="1">Binds to the 23S rRNA.</text>
</comment>
<comment type="similarity">
    <text evidence="1">Belongs to the bacterial ribosomal protein bL9 family.</text>
</comment>
<keyword id="KW-0687">Ribonucleoprotein</keyword>
<keyword id="KW-0689">Ribosomal protein</keyword>
<keyword id="KW-0694">RNA-binding</keyword>
<keyword id="KW-0699">rRNA-binding</keyword>
<feature type="chain" id="PRO_1000196267" description="Large ribosomal subunit protein bL9">
    <location>
        <begin position="1"/>
        <end position="150"/>
    </location>
</feature>
<evidence type="ECO:0000255" key="1">
    <source>
        <dbReference type="HAMAP-Rule" id="MF_00503"/>
    </source>
</evidence>
<evidence type="ECO:0000305" key="2"/>
<proteinExistence type="inferred from homology"/>
<accession>B8ZQ95</accession>